<reference key="1">
    <citation type="journal article" date="2005" name="Nature">
        <title>The genome of the social amoeba Dictyostelium discoideum.</title>
        <authorList>
            <person name="Eichinger L."/>
            <person name="Pachebat J.A."/>
            <person name="Gloeckner G."/>
            <person name="Rajandream M.A."/>
            <person name="Sucgang R."/>
            <person name="Berriman M."/>
            <person name="Song J."/>
            <person name="Olsen R."/>
            <person name="Szafranski K."/>
            <person name="Xu Q."/>
            <person name="Tunggal B."/>
            <person name="Kummerfeld S."/>
            <person name="Madera M."/>
            <person name="Konfortov B.A."/>
            <person name="Rivero F."/>
            <person name="Bankier A.T."/>
            <person name="Lehmann R."/>
            <person name="Hamlin N."/>
            <person name="Davies R."/>
            <person name="Gaudet P."/>
            <person name="Fey P."/>
            <person name="Pilcher K."/>
            <person name="Chen G."/>
            <person name="Saunders D."/>
            <person name="Sodergren E.J."/>
            <person name="Davis P."/>
            <person name="Kerhornou A."/>
            <person name="Nie X."/>
            <person name="Hall N."/>
            <person name="Anjard C."/>
            <person name="Hemphill L."/>
            <person name="Bason N."/>
            <person name="Farbrother P."/>
            <person name="Desany B."/>
            <person name="Just E."/>
            <person name="Morio T."/>
            <person name="Rost R."/>
            <person name="Churcher C.M."/>
            <person name="Cooper J."/>
            <person name="Haydock S."/>
            <person name="van Driessche N."/>
            <person name="Cronin A."/>
            <person name="Goodhead I."/>
            <person name="Muzny D.M."/>
            <person name="Mourier T."/>
            <person name="Pain A."/>
            <person name="Lu M."/>
            <person name="Harper D."/>
            <person name="Lindsay R."/>
            <person name="Hauser H."/>
            <person name="James K.D."/>
            <person name="Quiles M."/>
            <person name="Madan Babu M."/>
            <person name="Saito T."/>
            <person name="Buchrieser C."/>
            <person name="Wardroper A."/>
            <person name="Felder M."/>
            <person name="Thangavelu M."/>
            <person name="Johnson D."/>
            <person name="Knights A."/>
            <person name="Loulseged H."/>
            <person name="Mungall K.L."/>
            <person name="Oliver K."/>
            <person name="Price C."/>
            <person name="Quail M.A."/>
            <person name="Urushihara H."/>
            <person name="Hernandez J."/>
            <person name="Rabbinowitsch E."/>
            <person name="Steffen D."/>
            <person name="Sanders M."/>
            <person name="Ma J."/>
            <person name="Kohara Y."/>
            <person name="Sharp S."/>
            <person name="Simmonds M.N."/>
            <person name="Spiegler S."/>
            <person name="Tivey A."/>
            <person name="Sugano S."/>
            <person name="White B."/>
            <person name="Walker D."/>
            <person name="Woodward J.R."/>
            <person name="Winckler T."/>
            <person name="Tanaka Y."/>
            <person name="Shaulsky G."/>
            <person name="Schleicher M."/>
            <person name="Weinstock G.M."/>
            <person name="Rosenthal A."/>
            <person name="Cox E.C."/>
            <person name="Chisholm R.L."/>
            <person name="Gibbs R.A."/>
            <person name="Loomis W.F."/>
            <person name="Platzer M."/>
            <person name="Kay R.R."/>
            <person name="Williams J.G."/>
            <person name="Dear P.H."/>
            <person name="Noegel A.A."/>
            <person name="Barrell B.G."/>
            <person name="Kuspa A."/>
        </authorList>
    </citation>
    <scope>NUCLEOTIDE SEQUENCE [LARGE SCALE GENOMIC DNA]</scope>
    <source>
        <strain>AX4</strain>
    </source>
</reference>
<keyword id="KW-0342">GTP-binding</keyword>
<keyword id="KW-0547">Nucleotide-binding</keyword>
<keyword id="KW-1185">Reference proteome</keyword>
<sequence length="184" mass="21341">MLGDYRSGKTAIFNEIVGRKFGSYTNPSTFDYFYKEIMVDNELVGCNIWDTAGHEKFTTNLNKSFYRDVNCCVLCFDLHFEDSFKNLNKWMNEFHSKCLENGLENMELLPPFVLIGTKSDIPRTDISISNERIEQWCKNIEGQGIIDKVHYFETSAKLSQNIIMPFNTITKLALNYSNSIQKIK</sequence>
<gene>
    <name type="primary">rabN2</name>
    <name type="ORF">DDB_G0290793</name>
</gene>
<evidence type="ECO:0000250" key="1"/>
<evidence type="ECO:0000305" key="2"/>
<organism>
    <name type="scientific">Dictyostelium discoideum</name>
    <name type="common">Social amoeba</name>
    <dbReference type="NCBI Taxonomy" id="44689"/>
    <lineage>
        <taxon>Eukaryota</taxon>
        <taxon>Amoebozoa</taxon>
        <taxon>Evosea</taxon>
        <taxon>Eumycetozoa</taxon>
        <taxon>Dictyostelia</taxon>
        <taxon>Dictyosteliales</taxon>
        <taxon>Dictyosteliaceae</taxon>
        <taxon>Dictyostelium</taxon>
    </lineage>
</organism>
<protein>
    <recommendedName>
        <fullName>Ras-related protein RabN2</fullName>
    </recommendedName>
</protein>
<dbReference type="EMBL" id="AAFI02000171">
    <property type="protein sequence ID" value="EAL62030.1"/>
    <property type="molecule type" value="Genomic_DNA"/>
</dbReference>
<dbReference type="RefSeq" id="XP_635538.1">
    <property type="nucleotide sequence ID" value="XM_630446.1"/>
</dbReference>
<dbReference type="SMR" id="Q54FK2"/>
<dbReference type="FunCoup" id="Q54FK2">
    <property type="interactions" value="6"/>
</dbReference>
<dbReference type="STRING" id="44689.Q54FK2"/>
<dbReference type="PaxDb" id="44689-DDB0230028"/>
<dbReference type="EnsemblProtists" id="EAL62030">
    <property type="protein sequence ID" value="EAL62030"/>
    <property type="gene ID" value="DDB_G0290793"/>
</dbReference>
<dbReference type="GeneID" id="8627836"/>
<dbReference type="KEGG" id="ddi:DDB_G0290793"/>
<dbReference type="dictyBase" id="DDB_G0290793">
    <property type="gene designation" value="rabN2"/>
</dbReference>
<dbReference type="VEuPathDB" id="AmoebaDB:DDB_G0290793"/>
<dbReference type="eggNOG" id="KOG0394">
    <property type="taxonomic scope" value="Eukaryota"/>
</dbReference>
<dbReference type="HOGENOM" id="CLU_041217_10_6_1"/>
<dbReference type="InParanoid" id="Q54FK2"/>
<dbReference type="PhylomeDB" id="Q54FK2"/>
<dbReference type="Reactome" id="R-DDI-6798695">
    <property type="pathway name" value="Neutrophil degranulation"/>
</dbReference>
<dbReference type="Reactome" id="R-DDI-8854214">
    <property type="pathway name" value="TBC/RABGAPs"/>
</dbReference>
<dbReference type="Reactome" id="R-DDI-8873719">
    <property type="pathway name" value="RAB geranylgeranylation"/>
</dbReference>
<dbReference type="Reactome" id="R-DDI-8876198">
    <property type="pathway name" value="RAB GEFs exchange GTP for GDP on RABs"/>
</dbReference>
<dbReference type="Reactome" id="R-DDI-9706019">
    <property type="pathway name" value="RHOBTB3 ATPase cycle"/>
</dbReference>
<dbReference type="PRO" id="PR:Q54FK2"/>
<dbReference type="Proteomes" id="UP000002195">
    <property type="component" value="Chromosome 5"/>
</dbReference>
<dbReference type="GO" id="GO:0005770">
    <property type="term" value="C:late endosome"/>
    <property type="evidence" value="ECO:0000318"/>
    <property type="project" value="GO_Central"/>
</dbReference>
<dbReference type="GO" id="GO:0005764">
    <property type="term" value="C:lysosome"/>
    <property type="evidence" value="ECO:0000318"/>
    <property type="project" value="GO_Central"/>
</dbReference>
<dbReference type="GO" id="GO:0045335">
    <property type="term" value="C:phagocytic vesicle"/>
    <property type="evidence" value="ECO:0000318"/>
    <property type="project" value="GO_Central"/>
</dbReference>
<dbReference type="GO" id="GO:0005525">
    <property type="term" value="F:GTP binding"/>
    <property type="evidence" value="ECO:0007669"/>
    <property type="project" value="UniProtKB-KW"/>
</dbReference>
<dbReference type="GO" id="GO:0003924">
    <property type="term" value="F:GTPase activity"/>
    <property type="evidence" value="ECO:0007669"/>
    <property type="project" value="InterPro"/>
</dbReference>
<dbReference type="GO" id="GO:0090385">
    <property type="term" value="P:phagosome-lysosome fusion"/>
    <property type="evidence" value="ECO:0000318"/>
    <property type="project" value="GO_Central"/>
</dbReference>
<dbReference type="FunFam" id="3.40.50.300:FF:003048">
    <property type="entry name" value="Ras-related protein RabN2"/>
    <property type="match status" value="1"/>
</dbReference>
<dbReference type="Gene3D" id="3.40.50.300">
    <property type="entry name" value="P-loop containing nucleotide triphosphate hydrolases"/>
    <property type="match status" value="1"/>
</dbReference>
<dbReference type="InterPro" id="IPR027417">
    <property type="entry name" value="P-loop_NTPase"/>
</dbReference>
<dbReference type="InterPro" id="IPR005225">
    <property type="entry name" value="Small_GTP-bd"/>
</dbReference>
<dbReference type="InterPro" id="IPR001806">
    <property type="entry name" value="Small_GTPase"/>
</dbReference>
<dbReference type="NCBIfam" id="TIGR00231">
    <property type="entry name" value="small_GTP"/>
    <property type="match status" value="1"/>
</dbReference>
<dbReference type="PANTHER" id="PTHR47981">
    <property type="entry name" value="RAB FAMILY"/>
    <property type="match status" value="1"/>
</dbReference>
<dbReference type="PANTHER" id="PTHR47981:SF20">
    <property type="entry name" value="RAS-RELATED PROTEIN RAB-7A"/>
    <property type="match status" value="1"/>
</dbReference>
<dbReference type="Pfam" id="PF00071">
    <property type="entry name" value="Ras"/>
    <property type="match status" value="1"/>
</dbReference>
<dbReference type="PRINTS" id="PR00449">
    <property type="entry name" value="RASTRNSFRMNG"/>
</dbReference>
<dbReference type="SMART" id="SM00175">
    <property type="entry name" value="RAB"/>
    <property type="match status" value="1"/>
</dbReference>
<dbReference type="SMART" id="SM00173">
    <property type="entry name" value="RAS"/>
    <property type="match status" value="1"/>
</dbReference>
<dbReference type="SMART" id="SM00174">
    <property type="entry name" value="RHO"/>
    <property type="match status" value="1"/>
</dbReference>
<dbReference type="SUPFAM" id="SSF52540">
    <property type="entry name" value="P-loop containing nucleoside triphosphate hydrolases"/>
    <property type="match status" value="1"/>
</dbReference>
<dbReference type="PROSITE" id="PS51419">
    <property type="entry name" value="RAB"/>
    <property type="match status" value="1"/>
</dbReference>
<name>RABN2_DICDI</name>
<accession>Q54FK2</accession>
<feature type="chain" id="PRO_0000332763" description="Ras-related protein RabN2">
    <location>
        <begin position="1"/>
        <end position="184"/>
    </location>
</feature>
<feature type="short sequence motif" description="Effector region" evidence="1">
    <location>
        <begin position="25"/>
        <end position="32"/>
    </location>
</feature>
<feature type="binding site" evidence="1">
    <location>
        <begin position="3"/>
        <end position="10"/>
    </location>
    <ligand>
        <name>GTP</name>
        <dbReference type="ChEBI" id="CHEBI:37565"/>
    </ligand>
</feature>
<feature type="binding site" evidence="1">
    <location>
        <begin position="50"/>
        <end position="54"/>
    </location>
    <ligand>
        <name>GTP</name>
        <dbReference type="ChEBI" id="CHEBI:37565"/>
    </ligand>
</feature>
<feature type="binding site" evidence="1">
    <location>
        <begin position="117"/>
        <end position="120"/>
    </location>
    <ligand>
        <name>GTP</name>
        <dbReference type="ChEBI" id="CHEBI:37565"/>
    </ligand>
</feature>
<proteinExistence type="inferred from homology"/>
<comment type="similarity">
    <text evidence="2">Belongs to the small GTPase superfamily. Rab family.</text>
</comment>